<sequence>MVEPKYKRVILKLSGEALGGEKGFGIDWEVVESIAEEISKVRELGVEVAIVVGGGNFFRGRSAEHIDRATADYMGMLATVINSLALQSILEKRGIPTRVQSAIEMRQIAEPYIRRRAIRHLEKGRVVIFACGTGNPFFSTDTAAALRAAEIDAEAILLAKKVDGVYDSDPKKNPNAKKYDFITYLDVINQRLEVMDSTATSMCMDNQIPIVVFELAKGNIIKAVMGENIGTLVNVKEER</sequence>
<evidence type="ECO:0000255" key="1">
    <source>
        <dbReference type="HAMAP-Rule" id="MF_01220"/>
    </source>
</evidence>
<feature type="chain" id="PRO_1000053897" description="Uridylate kinase">
    <location>
        <begin position="1"/>
        <end position="239"/>
    </location>
</feature>
<feature type="region of interest" description="Involved in allosteric activation by GTP" evidence="1">
    <location>
        <begin position="20"/>
        <end position="25"/>
    </location>
</feature>
<feature type="binding site" evidence="1">
    <location>
        <begin position="12"/>
        <end position="15"/>
    </location>
    <ligand>
        <name>ATP</name>
        <dbReference type="ChEBI" id="CHEBI:30616"/>
    </ligand>
</feature>
<feature type="binding site" evidence="1">
    <location>
        <position position="54"/>
    </location>
    <ligand>
        <name>UMP</name>
        <dbReference type="ChEBI" id="CHEBI:57865"/>
    </ligand>
</feature>
<feature type="binding site" evidence="1">
    <location>
        <position position="55"/>
    </location>
    <ligand>
        <name>ATP</name>
        <dbReference type="ChEBI" id="CHEBI:30616"/>
    </ligand>
</feature>
<feature type="binding site" evidence="1">
    <location>
        <position position="59"/>
    </location>
    <ligand>
        <name>ATP</name>
        <dbReference type="ChEBI" id="CHEBI:30616"/>
    </ligand>
</feature>
<feature type="binding site" evidence="1">
    <location>
        <position position="72"/>
    </location>
    <ligand>
        <name>UMP</name>
        <dbReference type="ChEBI" id="CHEBI:57865"/>
    </ligand>
</feature>
<feature type="binding site" evidence="1">
    <location>
        <begin position="133"/>
        <end position="140"/>
    </location>
    <ligand>
        <name>UMP</name>
        <dbReference type="ChEBI" id="CHEBI:57865"/>
    </ligand>
</feature>
<feature type="binding site" evidence="1">
    <location>
        <position position="166"/>
    </location>
    <ligand>
        <name>ATP</name>
        <dbReference type="ChEBI" id="CHEBI:30616"/>
    </ligand>
</feature>
<feature type="binding site" evidence="1">
    <location>
        <position position="169"/>
    </location>
    <ligand>
        <name>ATP</name>
        <dbReference type="ChEBI" id="CHEBI:30616"/>
    </ligand>
</feature>
<name>PYRH_CALS8</name>
<protein>
    <recommendedName>
        <fullName evidence="1">Uridylate kinase</fullName>
        <shortName evidence="1">UK</shortName>
        <ecNumber evidence="1">2.7.4.22</ecNumber>
    </recommendedName>
    <alternativeName>
        <fullName evidence="1">Uridine monophosphate kinase</fullName>
        <shortName evidence="1">UMP kinase</shortName>
        <shortName evidence="1">UMPK</shortName>
    </alternativeName>
</protein>
<reference key="1">
    <citation type="submission" date="2007-04" db="EMBL/GenBank/DDBJ databases">
        <title>Genome sequence of the thermophilic hydrogen-producing bacterium Caldicellulosiruptor saccharolyticus DSM 8903.</title>
        <authorList>
            <person name="Copeland A."/>
            <person name="Lucas S."/>
            <person name="Lapidus A."/>
            <person name="Barry K."/>
            <person name="Detter J.C."/>
            <person name="Glavina del Rio T."/>
            <person name="Hammon N."/>
            <person name="Israni S."/>
            <person name="Dalin E."/>
            <person name="Tice H."/>
            <person name="Pitluck S."/>
            <person name="Kiss H."/>
            <person name="Brettin T."/>
            <person name="Bruce D."/>
            <person name="Han C."/>
            <person name="Schmutz J."/>
            <person name="Larimer F."/>
            <person name="Land M."/>
            <person name="Hauser L."/>
            <person name="Kyrpides N."/>
            <person name="Lykidis A."/>
            <person name="van de Werken H.J.G."/>
            <person name="Verhaart M.R.A."/>
            <person name="VanFossen A.L."/>
            <person name="Lewis D.L."/>
            <person name="Nichols J.D."/>
            <person name="Goorissen H.P."/>
            <person name="van Niel E.W.J."/>
            <person name="Stams F.J.M."/>
            <person name="Willquist K.U."/>
            <person name="Ward D.E."/>
            <person name="van der Oost J."/>
            <person name="Kelly R.M."/>
            <person name="Kengen S.M.W."/>
            <person name="Richardson P."/>
        </authorList>
    </citation>
    <scope>NUCLEOTIDE SEQUENCE [LARGE SCALE GENOMIC DNA]</scope>
    <source>
        <strain>ATCC 43494 / DSM 8903 / Tp8T 6331</strain>
    </source>
</reference>
<gene>
    <name evidence="1" type="primary">pyrH</name>
    <name type="ordered locus">Csac_2357</name>
</gene>
<accession>A4XM00</accession>
<comment type="function">
    <text evidence="1">Catalyzes the reversible phosphorylation of UMP to UDP.</text>
</comment>
<comment type="catalytic activity">
    <reaction evidence="1">
        <text>UMP + ATP = UDP + ADP</text>
        <dbReference type="Rhea" id="RHEA:24400"/>
        <dbReference type="ChEBI" id="CHEBI:30616"/>
        <dbReference type="ChEBI" id="CHEBI:57865"/>
        <dbReference type="ChEBI" id="CHEBI:58223"/>
        <dbReference type="ChEBI" id="CHEBI:456216"/>
        <dbReference type="EC" id="2.7.4.22"/>
    </reaction>
</comment>
<comment type="activity regulation">
    <text evidence="1">Allosterically activated by GTP. Inhibited by UTP.</text>
</comment>
<comment type="pathway">
    <text evidence="1">Pyrimidine metabolism; CTP biosynthesis via de novo pathway; UDP from UMP (UMPK route): step 1/1.</text>
</comment>
<comment type="subunit">
    <text evidence="1">Homohexamer.</text>
</comment>
<comment type="subcellular location">
    <subcellularLocation>
        <location evidence="1">Cytoplasm</location>
    </subcellularLocation>
</comment>
<comment type="similarity">
    <text evidence="1">Belongs to the UMP kinase family.</text>
</comment>
<dbReference type="EC" id="2.7.4.22" evidence="1"/>
<dbReference type="EMBL" id="CP000679">
    <property type="protein sequence ID" value="ABP67935.1"/>
    <property type="molecule type" value="Genomic_DNA"/>
</dbReference>
<dbReference type="RefSeq" id="WP_011917861.1">
    <property type="nucleotide sequence ID" value="NC_009437.1"/>
</dbReference>
<dbReference type="SMR" id="A4XM00"/>
<dbReference type="STRING" id="351627.Csac_2357"/>
<dbReference type="KEGG" id="csc:Csac_2357"/>
<dbReference type="eggNOG" id="COG0528">
    <property type="taxonomic scope" value="Bacteria"/>
</dbReference>
<dbReference type="HOGENOM" id="CLU_033861_0_0_9"/>
<dbReference type="OrthoDB" id="9807458at2"/>
<dbReference type="UniPathway" id="UPA00159">
    <property type="reaction ID" value="UER00275"/>
</dbReference>
<dbReference type="Proteomes" id="UP000000256">
    <property type="component" value="Chromosome"/>
</dbReference>
<dbReference type="GO" id="GO:0005737">
    <property type="term" value="C:cytoplasm"/>
    <property type="evidence" value="ECO:0007669"/>
    <property type="project" value="UniProtKB-SubCell"/>
</dbReference>
<dbReference type="GO" id="GO:0005524">
    <property type="term" value="F:ATP binding"/>
    <property type="evidence" value="ECO:0007669"/>
    <property type="project" value="UniProtKB-KW"/>
</dbReference>
<dbReference type="GO" id="GO:0033862">
    <property type="term" value="F:UMP kinase activity"/>
    <property type="evidence" value="ECO:0007669"/>
    <property type="project" value="UniProtKB-EC"/>
</dbReference>
<dbReference type="GO" id="GO:0044210">
    <property type="term" value="P:'de novo' CTP biosynthetic process"/>
    <property type="evidence" value="ECO:0007669"/>
    <property type="project" value="UniProtKB-UniRule"/>
</dbReference>
<dbReference type="GO" id="GO:0006225">
    <property type="term" value="P:UDP biosynthetic process"/>
    <property type="evidence" value="ECO:0007669"/>
    <property type="project" value="TreeGrafter"/>
</dbReference>
<dbReference type="CDD" id="cd04254">
    <property type="entry name" value="AAK_UMPK-PyrH-Ec"/>
    <property type="match status" value="1"/>
</dbReference>
<dbReference type="FunFam" id="3.40.1160.10:FF:000001">
    <property type="entry name" value="Uridylate kinase"/>
    <property type="match status" value="1"/>
</dbReference>
<dbReference type="Gene3D" id="3.40.1160.10">
    <property type="entry name" value="Acetylglutamate kinase-like"/>
    <property type="match status" value="1"/>
</dbReference>
<dbReference type="HAMAP" id="MF_01220_B">
    <property type="entry name" value="PyrH_B"/>
    <property type="match status" value="1"/>
</dbReference>
<dbReference type="InterPro" id="IPR036393">
    <property type="entry name" value="AceGlu_kinase-like_sf"/>
</dbReference>
<dbReference type="InterPro" id="IPR001048">
    <property type="entry name" value="Asp/Glu/Uridylate_kinase"/>
</dbReference>
<dbReference type="InterPro" id="IPR011817">
    <property type="entry name" value="Uridylate_kinase"/>
</dbReference>
<dbReference type="InterPro" id="IPR015963">
    <property type="entry name" value="Uridylate_kinase_bac"/>
</dbReference>
<dbReference type="NCBIfam" id="TIGR02075">
    <property type="entry name" value="pyrH_bact"/>
    <property type="match status" value="1"/>
</dbReference>
<dbReference type="PANTHER" id="PTHR42833">
    <property type="entry name" value="URIDYLATE KINASE"/>
    <property type="match status" value="1"/>
</dbReference>
<dbReference type="PANTHER" id="PTHR42833:SF4">
    <property type="entry name" value="URIDYLATE KINASE PUMPKIN, CHLOROPLASTIC"/>
    <property type="match status" value="1"/>
</dbReference>
<dbReference type="Pfam" id="PF00696">
    <property type="entry name" value="AA_kinase"/>
    <property type="match status" value="1"/>
</dbReference>
<dbReference type="PIRSF" id="PIRSF005650">
    <property type="entry name" value="Uridylate_kin"/>
    <property type="match status" value="1"/>
</dbReference>
<dbReference type="SUPFAM" id="SSF53633">
    <property type="entry name" value="Carbamate kinase-like"/>
    <property type="match status" value="1"/>
</dbReference>
<organism>
    <name type="scientific">Caldicellulosiruptor saccharolyticus (strain ATCC 43494 / DSM 8903 / Tp8T 6331)</name>
    <dbReference type="NCBI Taxonomy" id="351627"/>
    <lineage>
        <taxon>Bacteria</taxon>
        <taxon>Bacillati</taxon>
        <taxon>Bacillota</taxon>
        <taxon>Bacillota incertae sedis</taxon>
        <taxon>Caldicellulosiruptorales</taxon>
        <taxon>Caldicellulosiruptoraceae</taxon>
        <taxon>Caldicellulosiruptor</taxon>
    </lineage>
</organism>
<proteinExistence type="inferred from homology"/>
<keyword id="KW-0021">Allosteric enzyme</keyword>
<keyword id="KW-0067">ATP-binding</keyword>
<keyword id="KW-0963">Cytoplasm</keyword>
<keyword id="KW-0418">Kinase</keyword>
<keyword id="KW-0547">Nucleotide-binding</keyword>
<keyword id="KW-0665">Pyrimidine biosynthesis</keyword>
<keyword id="KW-0808">Transferase</keyword>